<protein>
    <recommendedName>
        <fullName>2-hydroxyhexa-2,4-dienoate hydratase</fullName>
        <ecNumber>4.2.1.132</ecNumber>
    </recommendedName>
</protein>
<evidence type="ECO:0000269" key="1">
    <source>
    </source>
</evidence>
<evidence type="ECO:0000269" key="2">
    <source>
    </source>
</evidence>
<evidence type="ECO:0000305" key="3"/>
<proteinExistence type="evidence at protein level"/>
<sequence>MSDKQFIETQGQRLYEALRSARTLAPLTDNHPEMTVEDAYHISLHMLRLREASGERVIGKKIGVTSKPVQDMLNVHQPDFGFLTDSMEYEDGAAVSLKAAGLIQPRAEGEIAFMLKKDLQGPGVTREDVLAATEWVAPCFEIVDSRINDWKIKIQDTVADNASCGVFVIGKQHTDPASLDLAAAAMQMSKNGQPAGSGLGSAVQGHPAEAVAWLANTLGAFGIPFKAGEVILSGSLAPLVPAAAGDRFDMVIEGMGTCSIQFTE</sequence>
<keyword id="KW-0442">Lipid degradation</keyword>
<keyword id="KW-0443">Lipid metabolism</keyword>
<keyword id="KW-0456">Lyase</keyword>
<keyword id="KW-0753">Steroid metabolism</keyword>
<accession>Q83VZ5</accession>
<gene>
    <name type="primary">tesE</name>
</gene>
<comment type="function">
    <text evidence="1 2">Involved in the catatabolism of testosterone. Catalyzes the hydration of 2-hydroxyhexa-2,4-dienoic acid to 4-hydroxy-2-oxohexanoic acid.</text>
</comment>
<comment type="catalytic activity">
    <reaction evidence="2">
        <text>(2Z,4Z)-2-hydroxyhexa-2,4-dienoate + H2O = 4-hydroxy-2-oxohexanoate</text>
        <dbReference type="Rhea" id="RHEA:32535"/>
        <dbReference type="ChEBI" id="CHEBI:15377"/>
        <dbReference type="ChEBI" id="CHEBI:53800"/>
        <dbReference type="ChEBI" id="CHEBI:63693"/>
        <dbReference type="EC" id="4.2.1.132"/>
    </reaction>
</comment>
<comment type="similarity">
    <text evidence="3">Belongs to the hydratase/decarboxylase family.</text>
</comment>
<reference key="1">
    <citation type="journal article" date="2003" name="Appl. Environ. Microbiol.">
        <title>Gene encoding the hydrolase for the product of the meta-cleavage reaction in testosterone degradation by Comamonas testosteroni.</title>
        <authorList>
            <person name="Horinouchi M."/>
            <person name="Hayashi T."/>
            <person name="Koshino H."/>
            <person name="Yamamoto T."/>
            <person name="Kudo T."/>
        </authorList>
    </citation>
    <scope>NUCLEOTIDE SEQUENCE [GENOMIC DNA]</scope>
    <scope>FUNCTION IN THE TESTOSTERONE DEGRADATION</scope>
    <source>
        <strain>TA441</strain>
    </source>
</reference>
<reference key="2">
    <citation type="journal article" date="2005" name="Appl. Environ. Microbiol.">
        <title>Identification of 9,17-dioxo-1,2,3,4,10,19-hexanorandrostan-5-oic acid, 4-hydroxy-2-oxohexanoic acid, and 2-hydroxyhexa-2,4-dienoic acid and related enzymes involved in testosterone degradation in Comamonas testosteroni TA441.</title>
        <authorList>
            <person name="Horinouchi M."/>
            <person name="Hayashi T."/>
            <person name="Koshino H."/>
            <person name="Kurita T."/>
            <person name="Kudo T."/>
        </authorList>
    </citation>
    <scope>FUNCTION AS A HYDRATASE</scope>
    <scope>CATALYTIC ACTIVITY</scope>
</reference>
<name>TESE_COMTE</name>
<dbReference type="EC" id="4.2.1.132"/>
<dbReference type="EMBL" id="AB063482">
    <property type="protein sequence ID" value="BAC67694.1"/>
    <property type="molecule type" value="Genomic_DNA"/>
</dbReference>
<dbReference type="RefSeq" id="WP_149355993.1">
    <property type="nucleotide sequence ID" value="NZ_BKBW01000005.1"/>
</dbReference>
<dbReference type="SMR" id="Q83VZ5"/>
<dbReference type="KEGG" id="ag:BAC67694"/>
<dbReference type="BioCyc" id="MetaCyc:MONOMER-16928"/>
<dbReference type="GO" id="GO:0005737">
    <property type="term" value="C:cytoplasm"/>
    <property type="evidence" value="ECO:0007669"/>
    <property type="project" value="TreeGrafter"/>
</dbReference>
<dbReference type="GO" id="GO:0034856">
    <property type="term" value="F:2-hydroxyhexa-2,4-dienoate hydratase activity"/>
    <property type="evidence" value="ECO:0007669"/>
    <property type="project" value="UniProtKB-EC"/>
</dbReference>
<dbReference type="GO" id="GO:0008684">
    <property type="term" value="F:2-oxopent-4-enoate hydratase activity"/>
    <property type="evidence" value="ECO:0007669"/>
    <property type="project" value="TreeGrafter"/>
</dbReference>
<dbReference type="GO" id="GO:0006706">
    <property type="term" value="P:steroid catabolic process"/>
    <property type="evidence" value="ECO:0000314"/>
    <property type="project" value="UniProtKB"/>
</dbReference>
<dbReference type="Gene3D" id="3.90.850.10">
    <property type="entry name" value="Fumarylacetoacetase-like, C-terminal domain"/>
    <property type="match status" value="1"/>
</dbReference>
<dbReference type="InterPro" id="IPR011234">
    <property type="entry name" value="Fumarylacetoacetase-like_C"/>
</dbReference>
<dbReference type="InterPro" id="IPR036663">
    <property type="entry name" value="Fumarylacetoacetase_C_sf"/>
</dbReference>
<dbReference type="InterPro" id="IPR050772">
    <property type="entry name" value="Hydratase-Decarb/MhpD_sf"/>
</dbReference>
<dbReference type="PANTHER" id="PTHR30143:SF0">
    <property type="entry name" value="2-KETO-4-PENTENOATE HYDRATASE"/>
    <property type="match status" value="1"/>
</dbReference>
<dbReference type="PANTHER" id="PTHR30143">
    <property type="entry name" value="ACID HYDRATASE"/>
    <property type="match status" value="1"/>
</dbReference>
<dbReference type="Pfam" id="PF01557">
    <property type="entry name" value="FAA_hydrolase"/>
    <property type="match status" value="1"/>
</dbReference>
<dbReference type="SUPFAM" id="SSF56529">
    <property type="entry name" value="FAH"/>
    <property type="match status" value="1"/>
</dbReference>
<feature type="chain" id="PRO_0000418840" description="2-hydroxyhexa-2,4-dienoate hydratase">
    <location>
        <begin position="1"/>
        <end position="264"/>
    </location>
</feature>
<organism>
    <name type="scientific">Comamonas testosteroni</name>
    <name type="common">Pseudomonas testosteroni</name>
    <dbReference type="NCBI Taxonomy" id="285"/>
    <lineage>
        <taxon>Bacteria</taxon>
        <taxon>Pseudomonadati</taxon>
        <taxon>Pseudomonadota</taxon>
        <taxon>Betaproteobacteria</taxon>
        <taxon>Burkholderiales</taxon>
        <taxon>Comamonadaceae</taxon>
        <taxon>Comamonas</taxon>
    </lineage>
</organism>